<keyword id="KW-0067">ATP-binding</keyword>
<keyword id="KW-0418">Kinase</keyword>
<keyword id="KW-0547">Nucleotide-binding</keyword>
<keyword id="KW-0723">Serine/threonine-protein kinase</keyword>
<keyword id="KW-0808">Transferase</keyword>
<sequence>MQSKEDFIEMRVPASAEYVSLIRLTLSGVFSRAGATYDDIEDAKIAVSEAVTNAVKHAYKENNNVGIINIYFEILEDKIKIVISDKGDSFDYETTKSKIGPYDKDENIDFLREGGLGLFLIESLMDEVTVYKESGVTISMTKYIKKEQVRNNGERVEIS</sequence>
<proteinExistence type="inferred from homology"/>
<gene>
    <name evidence="1" type="primary">rsbW</name>
    <name type="ordered locus">SaurJH1_2139</name>
</gene>
<dbReference type="EC" id="2.7.11.1" evidence="1"/>
<dbReference type="EMBL" id="CP000736">
    <property type="protein sequence ID" value="ABR52968.1"/>
    <property type="molecule type" value="Genomic_DNA"/>
</dbReference>
<dbReference type="SMR" id="A6U3F0"/>
<dbReference type="KEGG" id="sah:SaurJH1_2139"/>
<dbReference type="HOGENOM" id="CLU_090336_11_1_9"/>
<dbReference type="GO" id="GO:0005524">
    <property type="term" value="F:ATP binding"/>
    <property type="evidence" value="ECO:0007669"/>
    <property type="project" value="UniProtKB-KW"/>
</dbReference>
<dbReference type="GO" id="GO:0106310">
    <property type="term" value="F:protein serine kinase activity"/>
    <property type="evidence" value="ECO:0007669"/>
    <property type="project" value="RHEA"/>
</dbReference>
<dbReference type="GO" id="GO:0004674">
    <property type="term" value="F:protein serine/threonine kinase activity"/>
    <property type="evidence" value="ECO:0007669"/>
    <property type="project" value="UniProtKB-KW"/>
</dbReference>
<dbReference type="GO" id="GO:0016989">
    <property type="term" value="F:sigma factor antagonist activity"/>
    <property type="evidence" value="ECO:0007669"/>
    <property type="project" value="InterPro"/>
</dbReference>
<dbReference type="CDD" id="cd16936">
    <property type="entry name" value="HATPase_RsbW-like"/>
    <property type="match status" value="1"/>
</dbReference>
<dbReference type="Gene3D" id="3.30.565.10">
    <property type="entry name" value="Histidine kinase-like ATPase, C-terminal domain"/>
    <property type="match status" value="1"/>
</dbReference>
<dbReference type="HAMAP" id="MF_00638">
    <property type="entry name" value="Anti_sigma_B"/>
    <property type="match status" value="1"/>
</dbReference>
<dbReference type="InterPro" id="IPR050267">
    <property type="entry name" value="Anti-sigma-factor_SerPK"/>
</dbReference>
<dbReference type="InterPro" id="IPR036890">
    <property type="entry name" value="HATPase_C_sf"/>
</dbReference>
<dbReference type="InterPro" id="IPR010193">
    <property type="entry name" value="RsbW"/>
</dbReference>
<dbReference type="NCBIfam" id="NF003144">
    <property type="entry name" value="PRK04069.1"/>
    <property type="match status" value="1"/>
</dbReference>
<dbReference type="NCBIfam" id="TIGR01924">
    <property type="entry name" value="rsbW_low_gc"/>
    <property type="match status" value="1"/>
</dbReference>
<dbReference type="PANTHER" id="PTHR35526">
    <property type="entry name" value="ANTI-SIGMA-F FACTOR RSBW-RELATED"/>
    <property type="match status" value="1"/>
</dbReference>
<dbReference type="PANTHER" id="PTHR35526:SF9">
    <property type="entry name" value="SERINE-PROTEIN KINASE RSBW"/>
    <property type="match status" value="1"/>
</dbReference>
<dbReference type="Pfam" id="PF13581">
    <property type="entry name" value="HATPase_c_2"/>
    <property type="match status" value="1"/>
</dbReference>
<dbReference type="SUPFAM" id="SSF55874">
    <property type="entry name" value="ATPase domain of HSP90 chaperone/DNA topoisomerase II/histidine kinase"/>
    <property type="match status" value="1"/>
</dbReference>
<protein>
    <recommendedName>
        <fullName evidence="1">Serine-protein kinase RsbW</fullName>
        <ecNumber evidence="1">2.7.11.1</ecNumber>
    </recommendedName>
    <alternativeName>
        <fullName evidence="1">Anti-sigma-B factor</fullName>
    </alternativeName>
    <alternativeName>
        <fullName evidence="1">Sigma-B negative effector RsbW</fullName>
    </alternativeName>
</protein>
<evidence type="ECO:0000255" key="1">
    <source>
        <dbReference type="HAMAP-Rule" id="MF_00638"/>
    </source>
</evidence>
<accession>A6U3F0</accession>
<organism>
    <name type="scientific">Staphylococcus aureus (strain JH1)</name>
    <dbReference type="NCBI Taxonomy" id="359787"/>
    <lineage>
        <taxon>Bacteria</taxon>
        <taxon>Bacillati</taxon>
        <taxon>Bacillota</taxon>
        <taxon>Bacilli</taxon>
        <taxon>Bacillales</taxon>
        <taxon>Staphylococcaceae</taxon>
        <taxon>Staphylococcus</taxon>
    </lineage>
</organism>
<name>RSBW_STAA2</name>
<reference key="1">
    <citation type="submission" date="2007-06" db="EMBL/GenBank/DDBJ databases">
        <title>Complete sequence of chromosome of Staphylococcus aureus subsp. aureus JH1.</title>
        <authorList>
            <consortium name="US DOE Joint Genome Institute"/>
            <person name="Copeland A."/>
            <person name="Lucas S."/>
            <person name="Lapidus A."/>
            <person name="Barry K."/>
            <person name="Detter J.C."/>
            <person name="Glavina del Rio T."/>
            <person name="Hammon N."/>
            <person name="Israni S."/>
            <person name="Dalin E."/>
            <person name="Tice H."/>
            <person name="Pitluck S."/>
            <person name="Chain P."/>
            <person name="Malfatti S."/>
            <person name="Shin M."/>
            <person name="Vergez L."/>
            <person name="Schmutz J."/>
            <person name="Larimer F."/>
            <person name="Land M."/>
            <person name="Hauser L."/>
            <person name="Kyrpides N."/>
            <person name="Ivanova N."/>
            <person name="Tomasz A."/>
            <person name="Richardson P."/>
        </authorList>
    </citation>
    <scope>NUCLEOTIDE SEQUENCE [LARGE SCALE GENOMIC DNA]</scope>
    <source>
        <strain>JH1</strain>
    </source>
</reference>
<comment type="function">
    <text evidence="1">Negative regulator of sigma-B activity. Phosphorylates and inactivates its specific antagonist protein, RsbV. Upon phosphorylation of RsbV, RsbW is released and binds to sigma-B, thereby blocking its ability to form an RNA polymerase holoenzyme (E-sigma-B).</text>
</comment>
<comment type="catalytic activity">
    <reaction evidence="1">
        <text>L-seryl-[protein] + ATP = O-phospho-L-seryl-[protein] + ADP + H(+)</text>
        <dbReference type="Rhea" id="RHEA:17989"/>
        <dbReference type="Rhea" id="RHEA-COMP:9863"/>
        <dbReference type="Rhea" id="RHEA-COMP:11604"/>
        <dbReference type="ChEBI" id="CHEBI:15378"/>
        <dbReference type="ChEBI" id="CHEBI:29999"/>
        <dbReference type="ChEBI" id="CHEBI:30616"/>
        <dbReference type="ChEBI" id="CHEBI:83421"/>
        <dbReference type="ChEBI" id="CHEBI:456216"/>
        <dbReference type="EC" id="2.7.11.1"/>
    </reaction>
</comment>
<comment type="catalytic activity">
    <reaction evidence="1">
        <text>L-threonyl-[protein] + ATP = O-phospho-L-threonyl-[protein] + ADP + H(+)</text>
        <dbReference type="Rhea" id="RHEA:46608"/>
        <dbReference type="Rhea" id="RHEA-COMP:11060"/>
        <dbReference type="Rhea" id="RHEA-COMP:11605"/>
        <dbReference type="ChEBI" id="CHEBI:15378"/>
        <dbReference type="ChEBI" id="CHEBI:30013"/>
        <dbReference type="ChEBI" id="CHEBI:30616"/>
        <dbReference type="ChEBI" id="CHEBI:61977"/>
        <dbReference type="ChEBI" id="CHEBI:456216"/>
        <dbReference type="EC" id="2.7.11.1"/>
    </reaction>
</comment>
<comment type="similarity">
    <text evidence="1">Belongs to the anti-sigma-factor family.</text>
</comment>
<feature type="chain" id="PRO_1000082672" description="Serine-protein kinase RsbW">
    <location>
        <begin position="1"/>
        <end position="159"/>
    </location>
</feature>